<feature type="signal peptide" evidence="1">
    <location>
        <begin position="1"/>
        <end position="22"/>
    </location>
</feature>
<feature type="chain" id="PRO_0000137914" description="UPF0098 protein PYRAB11530">
    <location>
        <begin position="23"/>
        <end position="178"/>
    </location>
</feature>
<reference key="1">
    <citation type="journal article" date="2003" name="Mol. Microbiol.">
        <title>An integrated analysis of the genome of the hyperthermophilic archaeon Pyrococcus abyssi.</title>
        <authorList>
            <person name="Cohen G.N."/>
            <person name="Barbe V."/>
            <person name="Flament D."/>
            <person name="Galperin M."/>
            <person name="Heilig R."/>
            <person name="Lecompte O."/>
            <person name="Poch O."/>
            <person name="Prieur D."/>
            <person name="Querellou J."/>
            <person name="Ripp R."/>
            <person name="Thierry J.-C."/>
            <person name="Van der Oost J."/>
            <person name="Weissenbach J."/>
            <person name="Zivanovic Y."/>
            <person name="Forterre P."/>
        </authorList>
    </citation>
    <scope>NUCLEOTIDE SEQUENCE [LARGE SCALE GENOMIC DNA]</scope>
    <source>
        <strain>GE5 / Orsay</strain>
    </source>
</reference>
<reference key="2">
    <citation type="journal article" date="2012" name="Curr. Microbiol.">
        <title>Re-annotation of two hyperthermophilic archaea Pyrococcus abyssi GE5 and Pyrococcus furiosus DSM 3638.</title>
        <authorList>
            <person name="Gao J."/>
            <person name="Wang J."/>
        </authorList>
    </citation>
    <scope>GENOME REANNOTATION</scope>
    <source>
        <strain>GE5 / Orsay</strain>
    </source>
</reference>
<name>Y1153_PYRAB</name>
<comment type="similarity">
    <text evidence="2">Belongs to the UPF0098 family.</text>
</comment>
<comment type="sequence caution" evidence="2">
    <conflict type="erroneous initiation">
        <sequence resource="EMBL-CDS" id="CAB50064"/>
    </conflict>
    <text>Extended N-terminus.</text>
</comment>
<dbReference type="EMBL" id="AJ248286">
    <property type="protein sequence ID" value="CAB50064.1"/>
    <property type="status" value="ALT_INIT"/>
    <property type="molecule type" value="Genomic_DNA"/>
</dbReference>
<dbReference type="EMBL" id="HE613800">
    <property type="protein sequence ID" value="CCE70570.1"/>
    <property type="molecule type" value="Genomic_DNA"/>
</dbReference>
<dbReference type="PIR" id="C75095">
    <property type="entry name" value="C75095"/>
</dbReference>
<dbReference type="RefSeq" id="WP_048147291.1">
    <property type="nucleotide sequence ID" value="NC_000868.1"/>
</dbReference>
<dbReference type="SMR" id="Q9UZJ3"/>
<dbReference type="STRING" id="272844.PAB0765"/>
<dbReference type="KEGG" id="pab:PAB0765"/>
<dbReference type="PATRIC" id="fig|272844.11.peg.1211"/>
<dbReference type="eggNOG" id="arCOG04702">
    <property type="taxonomic scope" value="Archaea"/>
</dbReference>
<dbReference type="HOGENOM" id="CLU_083918_3_0_2"/>
<dbReference type="OrthoDB" id="28720at2157"/>
<dbReference type="Proteomes" id="UP000000810">
    <property type="component" value="Chromosome"/>
</dbReference>
<dbReference type="Proteomes" id="UP000009139">
    <property type="component" value="Chromosome"/>
</dbReference>
<dbReference type="CDD" id="cd00865">
    <property type="entry name" value="PEBP_bact_arch"/>
    <property type="match status" value="1"/>
</dbReference>
<dbReference type="Gene3D" id="3.90.280.10">
    <property type="entry name" value="PEBP-like"/>
    <property type="match status" value="1"/>
</dbReference>
<dbReference type="InterPro" id="IPR008914">
    <property type="entry name" value="PEBP"/>
</dbReference>
<dbReference type="InterPro" id="IPR036610">
    <property type="entry name" value="PEBP-like_sf"/>
</dbReference>
<dbReference type="InterPro" id="IPR005247">
    <property type="entry name" value="YbhB_YbcL/LppC-like"/>
</dbReference>
<dbReference type="NCBIfam" id="TIGR00481">
    <property type="entry name" value="YbhB/YbcL family Raf kinase inhibitor-like protein"/>
    <property type="match status" value="1"/>
</dbReference>
<dbReference type="PANTHER" id="PTHR30289:SF1">
    <property type="entry name" value="PEBP (PHOSPHATIDYLETHANOLAMINE-BINDING PROTEIN) FAMILY PROTEIN"/>
    <property type="match status" value="1"/>
</dbReference>
<dbReference type="PANTHER" id="PTHR30289">
    <property type="entry name" value="UNCHARACTERIZED PROTEIN YBCL-RELATED"/>
    <property type="match status" value="1"/>
</dbReference>
<dbReference type="Pfam" id="PF01161">
    <property type="entry name" value="PBP"/>
    <property type="match status" value="1"/>
</dbReference>
<dbReference type="SUPFAM" id="SSF49777">
    <property type="entry name" value="PEBP-like"/>
    <property type="match status" value="1"/>
</dbReference>
<dbReference type="PROSITE" id="PS51257">
    <property type="entry name" value="PROKAR_LIPOPROTEIN"/>
    <property type="match status" value="1"/>
</dbReference>
<proteinExistence type="inferred from homology"/>
<accession>Q9UZJ3</accession>
<accession>G8ZKC7</accession>
<evidence type="ECO:0000255" key="1">
    <source>
        <dbReference type="PROSITE-ProRule" id="PRU00303"/>
    </source>
</evidence>
<evidence type="ECO:0000305" key="2"/>
<protein>
    <recommendedName>
        <fullName>UPF0098 protein PYRAB11530</fullName>
    </recommendedName>
</protein>
<gene>
    <name type="ordered locus">PYRAB11530</name>
    <name type="ORF">PAB0765</name>
</gene>
<keyword id="KW-0732">Signal</keyword>
<organism>
    <name type="scientific">Pyrococcus abyssi (strain GE5 / Orsay)</name>
    <dbReference type="NCBI Taxonomy" id="272844"/>
    <lineage>
        <taxon>Archaea</taxon>
        <taxon>Methanobacteriati</taxon>
        <taxon>Methanobacteriota</taxon>
        <taxon>Thermococci</taxon>
        <taxon>Thermococcales</taxon>
        <taxon>Thermococcaceae</taxon>
        <taxon>Pyrococcus</taxon>
    </lineage>
</organism>
<sequence length="178" mass="19777">MRYLVPLLVFMVLGMGCLGGGGEEMVKVSSVFGNDEFIPAKYTCEGIDVNPPLRIEGISENAKSLVIIVDDPDAPLGTFTHWIAWNIPPVEEIPEGIPKQGEVEKPIHMIQGRNDFGRIGYNGPCPPRGHGVHHYHFKVYVLDTTLNLRPGATREELEKAMEGHIIQFGELVGLYERK</sequence>